<keyword id="KW-0963">Cytoplasm</keyword>
<keyword id="KW-0441">Lipid A biosynthesis</keyword>
<keyword id="KW-0444">Lipid biosynthesis</keyword>
<keyword id="KW-0443">Lipid metabolism</keyword>
<keyword id="KW-0456">Lyase</keyword>
<keyword id="KW-1185">Reference proteome</keyword>
<sequence length="152" mass="17108">MEESPIRFADVDINEILKTLPHRYPFLLIDRVKNIRADYSGIGVKNVSIGEPCFQGHFPERPVYPGVLMIEGMAQTAGVIGIKSVEGTEKPRAVYFLTIDKCKFRKPVLPGQTIEYHMRSIGRRKTMWWFHGDAKVDGTIVAEADVGAMLTD</sequence>
<reference key="1">
    <citation type="journal article" date="2007" name="Science">
        <title>Legumes symbioses: absence of nod genes in photosynthetic bradyrhizobia.</title>
        <authorList>
            <person name="Giraud E."/>
            <person name="Moulin L."/>
            <person name="Vallenet D."/>
            <person name="Barbe V."/>
            <person name="Cytryn E."/>
            <person name="Avarre J.-C."/>
            <person name="Jaubert M."/>
            <person name="Simon D."/>
            <person name="Cartieaux F."/>
            <person name="Prin Y."/>
            <person name="Bena G."/>
            <person name="Hannibal L."/>
            <person name="Fardoux J."/>
            <person name="Kojadinovic M."/>
            <person name="Vuillet L."/>
            <person name="Lajus A."/>
            <person name="Cruveiller S."/>
            <person name="Rouy Z."/>
            <person name="Mangenot S."/>
            <person name="Segurens B."/>
            <person name="Dossat C."/>
            <person name="Franck W.L."/>
            <person name="Chang W.-S."/>
            <person name="Saunders E."/>
            <person name="Bruce D."/>
            <person name="Richardson P."/>
            <person name="Normand P."/>
            <person name="Dreyfus B."/>
            <person name="Pignol D."/>
            <person name="Stacey G."/>
            <person name="Emerich D."/>
            <person name="Vermeglio A."/>
            <person name="Medigue C."/>
            <person name="Sadowsky M."/>
        </authorList>
    </citation>
    <scope>NUCLEOTIDE SEQUENCE [LARGE SCALE GENOMIC DNA]</scope>
    <source>
        <strain>BTAi1 / ATCC BAA-1182</strain>
    </source>
</reference>
<organism>
    <name type="scientific">Bradyrhizobium sp. (strain BTAi1 / ATCC BAA-1182)</name>
    <dbReference type="NCBI Taxonomy" id="288000"/>
    <lineage>
        <taxon>Bacteria</taxon>
        <taxon>Pseudomonadati</taxon>
        <taxon>Pseudomonadota</taxon>
        <taxon>Alphaproteobacteria</taxon>
        <taxon>Hyphomicrobiales</taxon>
        <taxon>Nitrobacteraceae</taxon>
        <taxon>Bradyrhizobium</taxon>
    </lineage>
</organism>
<gene>
    <name evidence="1" type="primary">fabZ</name>
    <name type="ordered locus">BBta_4507</name>
</gene>
<dbReference type="EC" id="4.2.1.59" evidence="1"/>
<dbReference type="EMBL" id="CP000494">
    <property type="protein sequence ID" value="ABQ36539.1"/>
    <property type="molecule type" value="Genomic_DNA"/>
</dbReference>
<dbReference type="RefSeq" id="WP_012044535.1">
    <property type="nucleotide sequence ID" value="NC_009485.1"/>
</dbReference>
<dbReference type="SMR" id="A5EK45"/>
<dbReference type="STRING" id="288000.BBta_4507"/>
<dbReference type="KEGG" id="bbt:BBta_4507"/>
<dbReference type="eggNOG" id="COG0764">
    <property type="taxonomic scope" value="Bacteria"/>
</dbReference>
<dbReference type="HOGENOM" id="CLU_078912_1_0_5"/>
<dbReference type="OrthoDB" id="9772788at2"/>
<dbReference type="Proteomes" id="UP000000246">
    <property type="component" value="Chromosome"/>
</dbReference>
<dbReference type="GO" id="GO:0005737">
    <property type="term" value="C:cytoplasm"/>
    <property type="evidence" value="ECO:0007669"/>
    <property type="project" value="UniProtKB-SubCell"/>
</dbReference>
<dbReference type="GO" id="GO:0016020">
    <property type="term" value="C:membrane"/>
    <property type="evidence" value="ECO:0007669"/>
    <property type="project" value="GOC"/>
</dbReference>
<dbReference type="GO" id="GO:0019171">
    <property type="term" value="F:(3R)-hydroxyacyl-[acyl-carrier-protein] dehydratase activity"/>
    <property type="evidence" value="ECO:0007669"/>
    <property type="project" value="UniProtKB-EC"/>
</dbReference>
<dbReference type="GO" id="GO:0006633">
    <property type="term" value="P:fatty acid biosynthetic process"/>
    <property type="evidence" value="ECO:0007669"/>
    <property type="project" value="UniProtKB-UniRule"/>
</dbReference>
<dbReference type="GO" id="GO:0009245">
    <property type="term" value="P:lipid A biosynthetic process"/>
    <property type="evidence" value="ECO:0007669"/>
    <property type="project" value="UniProtKB-UniRule"/>
</dbReference>
<dbReference type="CDD" id="cd01288">
    <property type="entry name" value="FabZ"/>
    <property type="match status" value="1"/>
</dbReference>
<dbReference type="FunFam" id="3.10.129.10:FF:000001">
    <property type="entry name" value="3-hydroxyacyl-[acyl-carrier-protein] dehydratase FabZ"/>
    <property type="match status" value="1"/>
</dbReference>
<dbReference type="Gene3D" id="3.10.129.10">
    <property type="entry name" value="Hotdog Thioesterase"/>
    <property type="match status" value="1"/>
</dbReference>
<dbReference type="HAMAP" id="MF_00406">
    <property type="entry name" value="FabZ"/>
    <property type="match status" value="1"/>
</dbReference>
<dbReference type="InterPro" id="IPR013114">
    <property type="entry name" value="FabA_FabZ"/>
</dbReference>
<dbReference type="InterPro" id="IPR010084">
    <property type="entry name" value="FabZ"/>
</dbReference>
<dbReference type="InterPro" id="IPR029069">
    <property type="entry name" value="HotDog_dom_sf"/>
</dbReference>
<dbReference type="NCBIfam" id="TIGR01750">
    <property type="entry name" value="fabZ"/>
    <property type="match status" value="1"/>
</dbReference>
<dbReference type="NCBIfam" id="NF000582">
    <property type="entry name" value="PRK00006.1"/>
    <property type="match status" value="1"/>
</dbReference>
<dbReference type="PANTHER" id="PTHR30272">
    <property type="entry name" value="3-HYDROXYACYL-[ACYL-CARRIER-PROTEIN] DEHYDRATASE"/>
    <property type="match status" value="1"/>
</dbReference>
<dbReference type="PANTHER" id="PTHR30272:SF1">
    <property type="entry name" value="3-HYDROXYACYL-[ACYL-CARRIER-PROTEIN] DEHYDRATASE"/>
    <property type="match status" value="1"/>
</dbReference>
<dbReference type="Pfam" id="PF07977">
    <property type="entry name" value="FabA"/>
    <property type="match status" value="1"/>
</dbReference>
<dbReference type="SUPFAM" id="SSF54637">
    <property type="entry name" value="Thioesterase/thiol ester dehydrase-isomerase"/>
    <property type="match status" value="1"/>
</dbReference>
<proteinExistence type="inferred from homology"/>
<accession>A5EK45</accession>
<name>FABZ_BRASB</name>
<feature type="chain" id="PRO_0000340759" description="3-hydroxyacyl-[acyl-carrier-protein] dehydratase FabZ">
    <location>
        <begin position="1"/>
        <end position="152"/>
    </location>
</feature>
<feature type="active site" evidence="1">
    <location>
        <position position="57"/>
    </location>
</feature>
<evidence type="ECO:0000255" key="1">
    <source>
        <dbReference type="HAMAP-Rule" id="MF_00406"/>
    </source>
</evidence>
<protein>
    <recommendedName>
        <fullName evidence="1">3-hydroxyacyl-[acyl-carrier-protein] dehydratase FabZ</fullName>
        <ecNumber evidence="1">4.2.1.59</ecNumber>
    </recommendedName>
    <alternativeName>
        <fullName evidence="1">(3R)-hydroxymyristoyl-[acyl-carrier-protein] dehydratase</fullName>
        <shortName evidence="1">(3R)-hydroxymyristoyl-ACP dehydrase</shortName>
    </alternativeName>
    <alternativeName>
        <fullName evidence="1">Beta-hydroxyacyl-ACP dehydratase</fullName>
    </alternativeName>
</protein>
<comment type="function">
    <text evidence="1">Involved in unsaturated fatty acids biosynthesis. Catalyzes the dehydration of short chain beta-hydroxyacyl-ACPs and long chain saturated and unsaturated beta-hydroxyacyl-ACPs.</text>
</comment>
<comment type="catalytic activity">
    <reaction evidence="1">
        <text>a (3R)-hydroxyacyl-[ACP] = a (2E)-enoyl-[ACP] + H2O</text>
        <dbReference type="Rhea" id="RHEA:13097"/>
        <dbReference type="Rhea" id="RHEA-COMP:9925"/>
        <dbReference type="Rhea" id="RHEA-COMP:9945"/>
        <dbReference type="ChEBI" id="CHEBI:15377"/>
        <dbReference type="ChEBI" id="CHEBI:78784"/>
        <dbReference type="ChEBI" id="CHEBI:78827"/>
        <dbReference type="EC" id="4.2.1.59"/>
    </reaction>
</comment>
<comment type="subcellular location">
    <subcellularLocation>
        <location evidence="1">Cytoplasm</location>
    </subcellularLocation>
</comment>
<comment type="similarity">
    <text evidence="1">Belongs to the thioester dehydratase family. FabZ subfamily.</text>
</comment>